<reference key="1">
    <citation type="journal article" date="2008" name="Environ. Microbiol.">
        <title>The complete genome sequence of Moorella thermoacetica (f. Clostridium thermoaceticum).</title>
        <authorList>
            <person name="Pierce E."/>
            <person name="Xie G."/>
            <person name="Barabote R.D."/>
            <person name="Saunders E."/>
            <person name="Han C.S."/>
            <person name="Detter J.C."/>
            <person name="Richardson P."/>
            <person name="Brettin T.S."/>
            <person name="Das A."/>
            <person name="Ljungdahl L.G."/>
            <person name="Ragsdale S.W."/>
        </authorList>
    </citation>
    <scope>NUCLEOTIDE SEQUENCE [LARGE SCALE GENOMIC DNA]</scope>
    <source>
        <strain>ATCC 39073 / JCM 9320</strain>
    </source>
</reference>
<reference key="2">
    <citation type="journal article" date="2010" name="J. Biol. Chem.">
        <title>Identification and characterization of oxalate oxidoreductase, a novel thiamine pyrophosphate-dependent 2-oxoacid oxidoreductase that enables anaerobic growth on oxalate.</title>
        <authorList>
            <person name="Pierce E."/>
            <person name="Becker D.F."/>
            <person name="Ragsdale S.W."/>
        </authorList>
    </citation>
    <scope>IDENTIFICATION BY MASS SPECTROMETRY</scope>
    <scope>FUNCTION</scope>
    <scope>CATALYTIC ACTIVITY</scope>
    <scope>BIOPHYSICOCHEMICAL PROPERTIES</scope>
    <scope>SUBUNIT</scope>
</reference>
<proteinExistence type="evidence at protein level"/>
<organism>
    <name type="scientific">Moorella thermoacetica (strain ATCC 39073 / JCM 9320)</name>
    <dbReference type="NCBI Taxonomy" id="264732"/>
    <lineage>
        <taxon>Bacteria</taxon>
        <taxon>Bacillati</taxon>
        <taxon>Bacillota</taxon>
        <taxon>Clostridia</taxon>
        <taxon>Moorellales</taxon>
        <taxon>Moorellaceae</taxon>
        <taxon>Moorella</taxon>
    </lineage>
</organism>
<sequence>MGKVRNISGCVAVAHGVRLADVDVICSYPIRPYTGIMSELARMVADGELDAEFVHGEGEHAQLSVVYGASAAGARVFTGSSGVGVTYAMEVYSPISGERLPVQMAIADRTLDPPGDFGEEHTDAECCRDQGWIQGWASTPQEALDNTLIYYRVGEDQRVLLPQYACLDGYFVSHILGPVDIPDEAQVKEFLPPYKNHHVLDPRKPQIIGPQIEPAMGPPLQYQRYQAVKGVHKVLEEACDEFARIFGRKYDPYLDEYLTDDAEVIIFGQGAHMETAKAVARRLRNLGEKVGVARLRTFRPFPTEQIKERLSKFKAIGVLDVSANFGISCSGGVLLSELRAALYDYGDKVKTVGFVAGLGGEVVTHDEFYRMFQKLKEIAKTGKVEQTSYWIPFEL</sequence>
<keyword id="KW-0002">3D-structure</keyword>
<keyword id="KW-0560">Oxidoreductase</keyword>
<evidence type="ECO:0000269" key="1">
    <source>
    </source>
</evidence>
<evidence type="ECO:0000303" key="2">
    <source>
    </source>
</evidence>
<evidence type="ECO:0000312" key="3">
    <source>
        <dbReference type="EMBL" id="ABC19898.1"/>
    </source>
</evidence>
<evidence type="ECO:0007829" key="4">
    <source>
        <dbReference type="PDB" id="5EXD"/>
    </source>
</evidence>
<evidence type="ECO:0007829" key="5">
    <source>
        <dbReference type="PDB" id="5EXE"/>
    </source>
</evidence>
<accession>Q2RI41</accession>
<protein>
    <recommendedName>
        <fullName evidence="2">Oxalate oxidoreductase subunit alpha</fullName>
        <shortName evidence="2">OOR subunit alpha</shortName>
        <ecNumber evidence="1">1.2.7.10</ecNumber>
    </recommendedName>
</protein>
<comment type="function">
    <text evidence="1">Catalyzes the anaerobic oxidation of oxalate using a broad range of electron acceptors, including ferredoxin and the nickel-dependent carbon monoxide dehydrogenase. Does not require coenzyme A as cosubstrate. Enables anaerobic growth on oxalate which is used as energy source by the bacteria.</text>
</comment>
<comment type="catalytic activity">
    <reaction evidence="1">
        <text>oxidized 2[4Fe-4S]-[ferredoxin] + oxalate = reduced 2[4Fe-4S]-[ferredoxin] + 2 CO2</text>
        <dbReference type="Rhea" id="RHEA:30179"/>
        <dbReference type="Rhea" id="RHEA-COMP:10002"/>
        <dbReference type="Rhea" id="RHEA-COMP:10004"/>
        <dbReference type="ChEBI" id="CHEBI:16526"/>
        <dbReference type="ChEBI" id="CHEBI:30623"/>
        <dbReference type="ChEBI" id="CHEBI:33722"/>
        <dbReference type="ChEBI" id="CHEBI:33723"/>
        <dbReference type="EC" id="1.2.7.10"/>
    </reaction>
</comment>
<comment type="biophysicochemical properties">
    <kinetics>
        <KM evidence="1">58 uM for oxalate</KM>
        <text evidence="1">Kinetic parameters determined with the heterodimer oxalate oxidoreductase complex.</text>
    </kinetics>
    <phDependence>
        <text evidence="1">Optimum pH is 8.7.</text>
    </phDependence>
</comment>
<comment type="subunit">
    <text evidence="1">Dimer of heterotrimer of one alpha, one beta and one delta subunit.</text>
</comment>
<dbReference type="EC" id="1.2.7.10" evidence="1"/>
<dbReference type="EMBL" id="CP000232">
    <property type="protein sequence ID" value="ABC19898.1"/>
    <property type="molecule type" value="Genomic_DNA"/>
</dbReference>
<dbReference type="RefSeq" id="YP_430441.1">
    <property type="nucleotide sequence ID" value="NC_007644.1"/>
</dbReference>
<dbReference type="PDB" id="5C4I">
    <property type="method" value="X-ray"/>
    <property type="resolution" value="2.27 A"/>
    <property type="chains" value="A/D=1-395"/>
</dbReference>
<dbReference type="PDB" id="5EXD">
    <property type="method" value="X-ray"/>
    <property type="resolution" value="2.50 A"/>
    <property type="chains" value="A/D/G/J=1-395"/>
</dbReference>
<dbReference type="PDB" id="5EXE">
    <property type="method" value="X-ray"/>
    <property type="resolution" value="1.88 A"/>
    <property type="chains" value="A/D=1-395"/>
</dbReference>
<dbReference type="PDBsum" id="5C4I"/>
<dbReference type="PDBsum" id="5EXD"/>
<dbReference type="PDBsum" id="5EXE"/>
<dbReference type="SMR" id="Q2RI41"/>
<dbReference type="STRING" id="264732.Moth_1592"/>
<dbReference type="EnsemblBacteria" id="ABC19898">
    <property type="protein sequence ID" value="ABC19898"/>
    <property type="gene ID" value="Moth_1592"/>
</dbReference>
<dbReference type="KEGG" id="mta:Moth_1592"/>
<dbReference type="PATRIC" id="fig|264732.11.peg.1722"/>
<dbReference type="eggNOG" id="COG0674">
    <property type="taxonomic scope" value="Bacteria"/>
</dbReference>
<dbReference type="HOGENOM" id="CLU_002569_5_0_9"/>
<dbReference type="OrthoDB" id="9794954at2"/>
<dbReference type="BioCyc" id="MetaCyc:MONOMER-16172"/>
<dbReference type="BRENDA" id="1.2.7.10">
    <property type="organism ID" value="1528"/>
</dbReference>
<dbReference type="EvolutionaryTrace" id="Q2RI41"/>
<dbReference type="GO" id="GO:0016625">
    <property type="term" value="F:oxidoreductase activity, acting on the aldehyde or oxo group of donors, iron-sulfur protein as acceptor"/>
    <property type="evidence" value="ECO:0000314"/>
    <property type="project" value="UniProtKB"/>
</dbReference>
<dbReference type="GO" id="GO:0033611">
    <property type="term" value="P:oxalate catabolic process"/>
    <property type="evidence" value="ECO:0000314"/>
    <property type="project" value="UniProtKB"/>
</dbReference>
<dbReference type="GO" id="GO:0006979">
    <property type="term" value="P:response to oxidative stress"/>
    <property type="evidence" value="ECO:0007669"/>
    <property type="project" value="TreeGrafter"/>
</dbReference>
<dbReference type="CDD" id="cd07034">
    <property type="entry name" value="TPP_PYR_PFOR_IOR-alpha_like"/>
    <property type="match status" value="1"/>
</dbReference>
<dbReference type="FunFam" id="3.40.50.920:FF:000010">
    <property type="entry name" value="Pyruvate ferredoxin oxidoreductase, alpha subunit"/>
    <property type="match status" value="1"/>
</dbReference>
<dbReference type="FunFam" id="3.40.50.970:FF:000012">
    <property type="entry name" value="Pyruvate:ferredoxin (Flavodoxin) oxidoreductase"/>
    <property type="match status" value="1"/>
</dbReference>
<dbReference type="Gene3D" id="3.40.50.920">
    <property type="match status" value="1"/>
</dbReference>
<dbReference type="Gene3D" id="3.40.50.970">
    <property type="match status" value="1"/>
</dbReference>
<dbReference type="InterPro" id="IPR054917">
    <property type="entry name" value="OxalOxredalpha"/>
</dbReference>
<dbReference type="InterPro" id="IPR033412">
    <property type="entry name" value="PFOR_II"/>
</dbReference>
<dbReference type="InterPro" id="IPR050722">
    <property type="entry name" value="Pyruvate:ferred/Flavod_OxRd"/>
</dbReference>
<dbReference type="InterPro" id="IPR002880">
    <property type="entry name" value="Pyrv_Fd/Flavodoxin_OxRdtase_N"/>
</dbReference>
<dbReference type="InterPro" id="IPR029061">
    <property type="entry name" value="THDP-binding"/>
</dbReference>
<dbReference type="InterPro" id="IPR009014">
    <property type="entry name" value="Transketo_C/PFOR_II"/>
</dbReference>
<dbReference type="NCBIfam" id="NF045791">
    <property type="entry name" value="OxalOxredalpha"/>
    <property type="match status" value="1"/>
</dbReference>
<dbReference type="PANTHER" id="PTHR32154:SF30">
    <property type="entry name" value="2-OXOACID OXIDOREDUCTASE (FERREDOXIN)"/>
    <property type="match status" value="1"/>
</dbReference>
<dbReference type="PANTHER" id="PTHR32154">
    <property type="entry name" value="PYRUVATE-FLAVODOXIN OXIDOREDUCTASE-RELATED"/>
    <property type="match status" value="1"/>
</dbReference>
<dbReference type="Pfam" id="PF17147">
    <property type="entry name" value="PFOR_II"/>
    <property type="match status" value="1"/>
</dbReference>
<dbReference type="Pfam" id="PF01855">
    <property type="entry name" value="POR_N"/>
    <property type="match status" value="1"/>
</dbReference>
<dbReference type="SUPFAM" id="SSF52518">
    <property type="entry name" value="Thiamin diphosphate-binding fold (THDP-binding)"/>
    <property type="match status" value="1"/>
</dbReference>
<dbReference type="SUPFAM" id="SSF52922">
    <property type="entry name" value="TK C-terminal domain-like"/>
    <property type="match status" value="1"/>
</dbReference>
<feature type="chain" id="PRO_0000430797" description="Oxalate oxidoreductase subunit alpha">
    <location>
        <begin position="1"/>
        <end position="395"/>
    </location>
</feature>
<feature type="strand" evidence="5">
    <location>
        <begin position="4"/>
        <end position="7"/>
    </location>
</feature>
<feature type="helix" evidence="5">
    <location>
        <begin position="9"/>
        <end position="19"/>
    </location>
</feature>
<feature type="strand" evidence="5">
    <location>
        <begin position="23"/>
        <end position="27"/>
    </location>
</feature>
<feature type="turn" evidence="5">
    <location>
        <begin position="31"/>
        <end position="33"/>
    </location>
</feature>
<feature type="helix" evidence="5">
    <location>
        <begin position="34"/>
        <end position="45"/>
    </location>
</feature>
<feature type="strand" evidence="5">
    <location>
        <begin position="52"/>
        <end position="55"/>
    </location>
</feature>
<feature type="helix" evidence="5">
    <location>
        <begin position="59"/>
        <end position="71"/>
    </location>
</feature>
<feature type="strand" evidence="5">
    <location>
        <begin position="76"/>
        <end position="80"/>
    </location>
</feature>
<feature type="helix" evidence="5">
    <location>
        <begin position="83"/>
        <end position="87"/>
    </location>
</feature>
<feature type="helix" evidence="5">
    <location>
        <begin position="89"/>
        <end position="91"/>
    </location>
</feature>
<feature type="helix" evidence="5">
    <location>
        <begin position="92"/>
        <end position="97"/>
    </location>
</feature>
<feature type="strand" evidence="5">
    <location>
        <begin position="103"/>
        <end position="107"/>
    </location>
</feature>
<feature type="strand" evidence="5">
    <location>
        <begin position="112"/>
        <end position="114"/>
    </location>
</feature>
<feature type="strand" evidence="4">
    <location>
        <begin position="116"/>
        <end position="118"/>
    </location>
</feature>
<feature type="helix" evidence="5">
    <location>
        <begin position="122"/>
        <end position="125"/>
    </location>
</feature>
<feature type="turn" evidence="5">
    <location>
        <begin position="126"/>
        <end position="129"/>
    </location>
</feature>
<feature type="strand" evidence="5">
    <location>
        <begin position="133"/>
        <end position="139"/>
    </location>
</feature>
<feature type="helix" evidence="5">
    <location>
        <begin position="140"/>
        <end position="155"/>
    </location>
</feature>
<feature type="turn" evidence="5">
    <location>
        <begin position="157"/>
        <end position="159"/>
    </location>
</feature>
<feature type="strand" evidence="5">
    <location>
        <begin position="163"/>
        <end position="167"/>
    </location>
</feature>
<feature type="turn" evidence="5">
    <location>
        <begin position="169"/>
        <end position="174"/>
    </location>
</feature>
<feature type="strand" evidence="5">
    <location>
        <begin position="177"/>
        <end position="180"/>
    </location>
</feature>
<feature type="helix" evidence="5">
    <location>
        <begin position="184"/>
        <end position="190"/>
    </location>
</feature>
<feature type="strand" evidence="5">
    <location>
        <begin position="206"/>
        <end position="209"/>
    </location>
</feature>
<feature type="helix" evidence="5">
    <location>
        <begin position="214"/>
        <end position="216"/>
    </location>
</feature>
<feature type="helix" evidence="5">
    <location>
        <begin position="217"/>
        <end position="229"/>
    </location>
</feature>
<feature type="helix" evidence="5">
    <location>
        <begin position="231"/>
        <end position="246"/>
    </location>
</feature>
<feature type="strand" evidence="5">
    <location>
        <begin position="252"/>
        <end position="258"/>
    </location>
</feature>
<feature type="strand" evidence="5">
    <location>
        <begin position="263"/>
        <end position="268"/>
    </location>
</feature>
<feature type="helix" evidence="5">
    <location>
        <begin position="272"/>
        <end position="285"/>
    </location>
</feature>
<feature type="strand" evidence="5">
    <location>
        <begin position="290"/>
        <end position="296"/>
    </location>
</feature>
<feature type="helix" evidence="5">
    <location>
        <begin position="303"/>
        <end position="309"/>
    </location>
</feature>
<feature type="strand" evidence="4">
    <location>
        <begin position="310"/>
        <end position="312"/>
    </location>
</feature>
<feature type="strand" evidence="5">
    <location>
        <begin position="314"/>
        <end position="320"/>
    </location>
</feature>
<feature type="helix" evidence="5">
    <location>
        <begin position="328"/>
        <end position="330"/>
    </location>
</feature>
<feature type="helix" evidence="5">
    <location>
        <begin position="333"/>
        <end position="341"/>
    </location>
</feature>
<feature type="helix" evidence="5">
    <location>
        <begin position="343"/>
        <end position="345"/>
    </location>
</feature>
<feature type="turn" evidence="5">
    <location>
        <begin position="346"/>
        <end position="348"/>
    </location>
</feature>
<feature type="strand" evidence="5">
    <location>
        <begin position="349"/>
        <end position="355"/>
    </location>
</feature>
<feature type="helix" evidence="5">
    <location>
        <begin position="358"/>
        <end position="360"/>
    </location>
</feature>
<feature type="helix" evidence="5">
    <location>
        <begin position="365"/>
        <end position="381"/>
    </location>
</feature>
<feature type="strand" evidence="5">
    <location>
        <begin position="385"/>
        <end position="390"/>
    </location>
</feature>
<feature type="turn" evidence="5">
    <location>
        <begin position="391"/>
        <end position="393"/>
    </location>
</feature>
<name>OORA_MOOTA</name>
<gene>
    <name evidence="3" type="ordered locus">Moth_1592</name>
</gene>